<reference key="1">
    <citation type="journal article" date="2000" name="Science">
        <title>The genome sequence of Drosophila melanogaster.</title>
        <authorList>
            <person name="Adams M.D."/>
            <person name="Celniker S.E."/>
            <person name="Holt R.A."/>
            <person name="Evans C.A."/>
            <person name="Gocayne J.D."/>
            <person name="Amanatides P.G."/>
            <person name="Scherer S.E."/>
            <person name="Li P.W."/>
            <person name="Hoskins R.A."/>
            <person name="Galle R.F."/>
            <person name="George R.A."/>
            <person name="Lewis S.E."/>
            <person name="Richards S."/>
            <person name="Ashburner M."/>
            <person name="Henderson S.N."/>
            <person name="Sutton G.G."/>
            <person name="Wortman J.R."/>
            <person name="Yandell M.D."/>
            <person name="Zhang Q."/>
            <person name="Chen L.X."/>
            <person name="Brandon R.C."/>
            <person name="Rogers Y.-H.C."/>
            <person name="Blazej R.G."/>
            <person name="Champe M."/>
            <person name="Pfeiffer B.D."/>
            <person name="Wan K.H."/>
            <person name="Doyle C."/>
            <person name="Baxter E.G."/>
            <person name="Helt G."/>
            <person name="Nelson C.R."/>
            <person name="Miklos G.L.G."/>
            <person name="Abril J.F."/>
            <person name="Agbayani A."/>
            <person name="An H.-J."/>
            <person name="Andrews-Pfannkoch C."/>
            <person name="Baldwin D."/>
            <person name="Ballew R.M."/>
            <person name="Basu A."/>
            <person name="Baxendale J."/>
            <person name="Bayraktaroglu L."/>
            <person name="Beasley E.M."/>
            <person name="Beeson K.Y."/>
            <person name="Benos P.V."/>
            <person name="Berman B.P."/>
            <person name="Bhandari D."/>
            <person name="Bolshakov S."/>
            <person name="Borkova D."/>
            <person name="Botchan M.R."/>
            <person name="Bouck J."/>
            <person name="Brokstein P."/>
            <person name="Brottier P."/>
            <person name="Burtis K.C."/>
            <person name="Busam D.A."/>
            <person name="Butler H."/>
            <person name="Cadieu E."/>
            <person name="Center A."/>
            <person name="Chandra I."/>
            <person name="Cherry J.M."/>
            <person name="Cawley S."/>
            <person name="Dahlke C."/>
            <person name="Davenport L.B."/>
            <person name="Davies P."/>
            <person name="de Pablos B."/>
            <person name="Delcher A."/>
            <person name="Deng Z."/>
            <person name="Mays A.D."/>
            <person name="Dew I."/>
            <person name="Dietz S.M."/>
            <person name="Dodson K."/>
            <person name="Doup L.E."/>
            <person name="Downes M."/>
            <person name="Dugan-Rocha S."/>
            <person name="Dunkov B.C."/>
            <person name="Dunn P."/>
            <person name="Durbin K.J."/>
            <person name="Evangelista C.C."/>
            <person name="Ferraz C."/>
            <person name="Ferriera S."/>
            <person name="Fleischmann W."/>
            <person name="Fosler C."/>
            <person name="Gabrielian A.E."/>
            <person name="Garg N.S."/>
            <person name="Gelbart W.M."/>
            <person name="Glasser K."/>
            <person name="Glodek A."/>
            <person name="Gong F."/>
            <person name="Gorrell J.H."/>
            <person name="Gu Z."/>
            <person name="Guan P."/>
            <person name="Harris M."/>
            <person name="Harris N.L."/>
            <person name="Harvey D.A."/>
            <person name="Heiman T.J."/>
            <person name="Hernandez J.R."/>
            <person name="Houck J."/>
            <person name="Hostin D."/>
            <person name="Houston K.A."/>
            <person name="Howland T.J."/>
            <person name="Wei M.-H."/>
            <person name="Ibegwam C."/>
            <person name="Jalali M."/>
            <person name="Kalush F."/>
            <person name="Karpen G.H."/>
            <person name="Ke Z."/>
            <person name="Kennison J.A."/>
            <person name="Ketchum K.A."/>
            <person name="Kimmel B.E."/>
            <person name="Kodira C.D."/>
            <person name="Kraft C.L."/>
            <person name="Kravitz S."/>
            <person name="Kulp D."/>
            <person name="Lai Z."/>
            <person name="Lasko P."/>
            <person name="Lei Y."/>
            <person name="Levitsky A.A."/>
            <person name="Li J.H."/>
            <person name="Li Z."/>
            <person name="Liang Y."/>
            <person name="Lin X."/>
            <person name="Liu X."/>
            <person name="Mattei B."/>
            <person name="McIntosh T.C."/>
            <person name="McLeod M.P."/>
            <person name="McPherson D."/>
            <person name="Merkulov G."/>
            <person name="Milshina N.V."/>
            <person name="Mobarry C."/>
            <person name="Morris J."/>
            <person name="Moshrefi A."/>
            <person name="Mount S.M."/>
            <person name="Moy M."/>
            <person name="Murphy B."/>
            <person name="Murphy L."/>
            <person name="Muzny D.M."/>
            <person name="Nelson D.L."/>
            <person name="Nelson D.R."/>
            <person name="Nelson K.A."/>
            <person name="Nixon K."/>
            <person name="Nusskern D.R."/>
            <person name="Pacleb J.M."/>
            <person name="Palazzolo M."/>
            <person name="Pittman G.S."/>
            <person name="Pan S."/>
            <person name="Pollard J."/>
            <person name="Puri V."/>
            <person name="Reese M.G."/>
            <person name="Reinert K."/>
            <person name="Remington K."/>
            <person name="Saunders R.D.C."/>
            <person name="Scheeler F."/>
            <person name="Shen H."/>
            <person name="Shue B.C."/>
            <person name="Siden-Kiamos I."/>
            <person name="Simpson M."/>
            <person name="Skupski M.P."/>
            <person name="Smith T.J."/>
            <person name="Spier E."/>
            <person name="Spradling A.C."/>
            <person name="Stapleton M."/>
            <person name="Strong R."/>
            <person name="Sun E."/>
            <person name="Svirskas R."/>
            <person name="Tector C."/>
            <person name="Turner R."/>
            <person name="Venter E."/>
            <person name="Wang A.H."/>
            <person name="Wang X."/>
            <person name="Wang Z.-Y."/>
            <person name="Wassarman D.A."/>
            <person name="Weinstock G.M."/>
            <person name="Weissenbach J."/>
            <person name="Williams S.M."/>
            <person name="Woodage T."/>
            <person name="Worley K.C."/>
            <person name="Wu D."/>
            <person name="Yang S."/>
            <person name="Yao Q.A."/>
            <person name="Ye J."/>
            <person name="Yeh R.-F."/>
            <person name="Zaveri J.S."/>
            <person name="Zhan M."/>
            <person name="Zhang G."/>
            <person name="Zhao Q."/>
            <person name="Zheng L."/>
            <person name="Zheng X.H."/>
            <person name="Zhong F.N."/>
            <person name="Zhong W."/>
            <person name="Zhou X."/>
            <person name="Zhu S.C."/>
            <person name="Zhu X."/>
            <person name="Smith H.O."/>
            <person name="Gibbs R.A."/>
            <person name="Myers E.W."/>
            <person name="Rubin G.M."/>
            <person name="Venter J.C."/>
        </authorList>
    </citation>
    <scope>NUCLEOTIDE SEQUENCE [LARGE SCALE GENOMIC DNA]</scope>
    <source>
        <strain>Berkeley</strain>
    </source>
</reference>
<reference key="2">
    <citation type="journal article" date="2002" name="Genome Biol.">
        <title>Annotation of the Drosophila melanogaster euchromatic genome: a systematic review.</title>
        <authorList>
            <person name="Misra S."/>
            <person name="Crosby M.A."/>
            <person name="Mungall C.J."/>
            <person name="Matthews B.B."/>
            <person name="Campbell K.S."/>
            <person name="Hradecky P."/>
            <person name="Huang Y."/>
            <person name="Kaminker J.S."/>
            <person name="Millburn G.H."/>
            <person name="Prochnik S.E."/>
            <person name="Smith C.D."/>
            <person name="Tupy J.L."/>
            <person name="Whitfield E.J."/>
            <person name="Bayraktaroglu L."/>
            <person name="Berman B.P."/>
            <person name="Bettencourt B.R."/>
            <person name="Celniker S.E."/>
            <person name="de Grey A.D.N.J."/>
            <person name="Drysdale R.A."/>
            <person name="Harris N.L."/>
            <person name="Richter J."/>
            <person name="Russo S."/>
            <person name="Schroeder A.J."/>
            <person name="Shu S.Q."/>
            <person name="Stapleton M."/>
            <person name="Yamada C."/>
            <person name="Ashburner M."/>
            <person name="Gelbart W.M."/>
            <person name="Rubin G.M."/>
            <person name="Lewis S.E."/>
        </authorList>
    </citation>
    <scope>GENOME REANNOTATION</scope>
    <source>
        <strain>Berkeley</strain>
    </source>
</reference>
<reference key="3">
    <citation type="submission" date="2006-04" db="EMBL/GenBank/DDBJ databases">
        <authorList>
            <person name="Stapleton M."/>
            <person name="Carlson J.W."/>
            <person name="Chavez C."/>
            <person name="Frise E."/>
            <person name="George R.A."/>
            <person name="Pacleb J.M."/>
            <person name="Park S."/>
            <person name="Wan K.H."/>
            <person name="Yu C."/>
            <person name="Celniker S.E."/>
        </authorList>
    </citation>
    <scope>NUCLEOTIDE SEQUENCE [LARGE SCALE MRNA] (ISOFORM A)</scope>
    <source>
        <strain>Berkeley</strain>
    </source>
</reference>
<proteinExistence type="evidence at transcript level"/>
<feature type="chain" id="PRO_0000051825" description="Probable cytochrome P450 4aa1">
    <location>
        <begin position="1"/>
        <end position="510"/>
    </location>
</feature>
<feature type="binding site" description="axial binding residue" evidence="1">
    <location>
        <position position="450"/>
    </location>
    <ligand>
        <name>heme</name>
        <dbReference type="ChEBI" id="CHEBI:30413"/>
    </ligand>
    <ligandPart>
        <name>Fe</name>
        <dbReference type="ChEBI" id="CHEBI:18248"/>
    </ligandPart>
</feature>
<feature type="splice variant" id="VSP_036909" description="In isoform A." evidence="2">
    <original>DSNRAPTMTDLHEMRYMEMCIKEALRLY</original>
    <variation>FLWGIYIYFLLKQCYICFICNKVMLVGI</variation>
    <location>
        <begin position="348"/>
        <end position="375"/>
    </location>
</feature>
<feature type="splice variant" id="VSP_036910" description="In isoform A." evidence="2">
    <location>
        <begin position="376"/>
        <end position="510"/>
    </location>
</feature>
<name>C4AA1_DROME</name>
<comment type="function">
    <text evidence="1">May be involved in the metabolism of insect hormones and in the breakdown of synthetic insecticides.</text>
</comment>
<comment type="cofactor">
    <cofactor evidence="1">
        <name>heme</name>
        <dbReference type="ChEBI" id="CHEBI:30413"/>
    </cofactor>
</comment>
<comment type="subcellular location">
    <subcellularLocation>
        <location evidence="3">Endoplasmic reticulum membrane</location>
        <topology evidence="3">Peripheral membrane protein</topology>
    </subcellularLocation>
    <subcellularLocation>
        <location evidence="3">Microsome membrane</location>
        <topology evidence="3">Peripheral membrane protein</topology>
    </subcellularLocation>
</comment>
<comment type="alternative products">
    <event type="alternative splicing"/>
    <isoform>
        <id>Q9V7G5-1</id>
        <name>B</name>
        <sequence type="displayed"/>
    </isoform>
    <isoform>
        <id>Q9V7G5-2</id>
        <name>A</name>
        <sequence type="described" ref="VSP_036909 VSP_036910"/>
    </isoform>
</comment>
<comment type="similarity">
    <text evidence="3">Belongs to the cytochrome P450 family.</text>
</comment>
<sequence>MFVEKVLERTTNLELCSILILLVISLSIYTFYATLNTYLRSVLLSLRLTGPPSLPFLGNCMLVTDKDLMRRCAGKAFDLYGSLVRIWVLLFPFFAVLEPEDLQVILSSKKHTNKVFFYRLMHNFLGDGLITSSGSKWSNHRRLIQPAFHHNLLEKFIDTFVDASQSLYENLDAEAVGTEINIAKYVNNCVLDILNEAVLGVPIKKRGQDVAMMEDSPFRQGKIMMPARFTQPWLLLDGIYHWTKMANDELNQKKRLNDFTRKMIQRRRQIQNNNNGNSERKCLLDHMIEISESNRDFTEEDIVNEACTFMLAGQDSVGAAVAFTLFLLTQNPECQDRCVLELATIFEDSNRAPTMTDLHEMRYMEMCIKEALRLYPSVPLIARKLGEEVRLAKHTLPAGSNVFICPYATHRLAHIYPDPEKFQPERFSPENSENRHPYAFLPFSAGPRYCIGNRFAIMEIKTIVSRLLRSYQLLPVTGKTTIAATFRITLRASGGLWVRLKERDHPLIAH</sequence>
<accession>Q9V7G5</accession>
<accession>Q1RKQ6</accession>
<organism>
    <name type="scientific">Drosophila melanogaster</name>
    <name type="common">Fruit fly</name>
    <dbReference type="NCBI Taxonomy" id="7227"/>
    <lineage>
        <taxon>Eukaryota</taxon>
        <taxon>Metazoa</taxon>
        <taxon>Ecdysozoa</taxon>
        <taxon>Arthropoda</taxon>
        <taxon>Hexapoda</taxon>
        <taxon>Insecta</taxon>
        <taxon>Pterygota</taxon>
        <taxon>Neoptera</taxon>
        <taxon>Endopterygota</taxon>
        <taxon>Diptera</taxon>
        <taxon>Brachycera</taxon>
        <taxon>Muscomorpha</taxon>
        <taxon>Ephydroidea</taxon>
        <taxon>Drosophilidae</taxon>
        <taxon>Drosophila</taxon>
        <taxon>Sophophora</taxon>
    </lineage>
</organism>
<evidence type="ECO:0000250" key="1"/>
<evidence type="ECO:0000303" key="2">
    <source ref="3"/>
</evidence>
<evidence type="ECO:0000305" key="3"/>
<keyword id="KW-0025">Alternative splicing</keyword>
<keyword id="KW-0256">Endoplasmic reticulum</keyword>
<keyword id="KW-0349">Heme</keyword>
<keyword id="KW-0408">Iron</keyword>
<keyword id="KW-0472">Membrane</keyword>
<keyword id="KW-0479">Metal-binding</keyword>
<keyword id="KW-0492">Microsome</keyword>
<keyword id="KW-0503">Monooxygenase</keyword>
<keyword id="KW-0560">Oxidoreductase</keyword>
<keyword id="KW-1185">Reference proteome</keyword>
<gene>
    <name type="primary">Cyp4aa1</name>
    <name type="ORF">CG8302</name>
</gene>
<protein>
    <recommendedName>
        <fullName>Probable cytochrome P450 4aa1</fullName>
        <ecNumber>1.14.-.-</ecNumber>
    </recommendedName>
    <alternativeName>
        <fullName>CYPIVAA1</fullName>
    </alternativeName>
</protein>
<dbReference type="EC" id="1.14.-.-"/>
<dbReference type="EMBL" id="AE013599">
    <property type="protein sequence ID" value="AAF58091.2"/>
    <property type="molecule type" value="Genomic_DNA"/>
</dbReference>
<dbReference type="EMBL" id="BT025154">
    <property type="protein sequence ID" value="ABE73324.1"/>
    <property type="molecule type" value="mRNA"/>
</dbReference>
<dbReference type="RefSeq" id="NP_611067.2">
    <molecule id="Q9V7G5-1"/>
    <property type="nucleotide sequence ID" value="NM_137223.3"/>
</dbReference>
<dbReference type="SMR" id="Q9V7G5"/>
<dbReference type="FunCoup" id="Q9V7G5">
    <property type="interactions" value="24"/>
</dbReference>
<dbReference type="STRING" id="7227.FBpp0113050"/>
<dbReference type="PaxDb" id="7227-FBpp0113050"/>
<dbReference type="EnsemblMetazoa" id="FBtr0114558">
    <molecule id="Q9V7G5-1"/>
    <property type="protein sequence ID" value="FBpp0113050"/>
    <property type="gene ID" value="FBgn0034053"/>
</dbReference>
<dbReference type="GeneID" id="36752"/>
<dbReference type="KEGG" id="dme:Dmel_CG8302"/>
<dbReference type="UCSC" id="CG8302-RB">
    <molecule id="Q9V7G5-1"/>
    <property type="organism name" value="d. melanogaster"/>
</dbReference>
<dbReference type="AGR" id="FB:FBgn0034053"/>
<dbReference type="CTD" id="36752"/>
<dbReference type="FlyBase" id="FBgn0034053">
    <property type="gene designation" value="Cyp4aa1"/>
</dbReference>
<dbReference type="VEuPathDB" id="VectorBase:FBgn0034053"/>
<dbReference type="eggNOG" id="KOG0157">
    <property type="taxonomic scope" value="Eukaryota"/>
</dbReference>
<dbReference type="GeneTree" id="ENSGT00940000166362"/>
<dbReference type="HOGENOM" id="CLU_001570_5_1_1"/>
<dbReference type="InParanoid" id="Q9V7G5"/>
<dbReference type="OMA" id="YVNNCVL"/>
<dbReference type="OrthoDB" id="1470350at2759"/>
<dbReference type="PhylomeDB" id="Q9V7G5"/>
<dbReference type="Reactome" id="R-DME-193144">
    <property type="pathway name" value="Estrogen biosynthesis"/>
</dbReference>
<dbReference type="Reactome" id="R-DME-211976">
    <property type="pathway name" value="Endogenous sterols"/>
</dbReference>
<dbReference type="BioGRID-ORCS" id="36752">
    <property type="hits" value="0 hits in 1 CRISPR screen"/>
</dbReference>
<dbReference type="GenomeRNAi" id="36752"/>
<dbReference type="PRO" id="PR:Q9V7G5"/>
<dbReference type="Proteomes" id="UP000000803">
    <property type="component" value="Chromosome 2R"/>
</dbReference>
<dbReference type="Bgee" id="FBgn0034053">
    <property type="expression patterns" value="Expressed in epithelial cell in body wall and 61 other cell types or tissues"/>
</dbReference>
<dbReference type="GO" id="GO:0005789">
    <property type="term" value="C:endoplasmic reticulum membrane"/>
    <property type="evidence" value="ECO:0007669"/>
    <property type="project" value="UniProtKB-SubCell"/>
</dbReference>
<dbReference type="GO" id="GO:0020037">
    <property type="term" value="F:heme binding"/>
    <property type="evidence" value="ECO:0007669"/>
    <property type="project" value="InterPro"/>
</dbReference>
<dbReference type="GO" id="GO:0005506">
    <property type="term" value="F:iron ion binding"/>
    <property type="evidence" value="ECO:0007669"/>
    <property type="project" value="InterPro"/>
</dbReference>
<dbReference type="GO" id="GO:0004497">
    <property type="term" value="F:monooxygenase activity"/>
    <property type="evidence" value="ECO:0007669"/>
    <property type="project" value="UniProtKB-KW"/>
</dbReference>
<dbReference type="GO" id="GO:0016705">
    <property type="term" value="F:oxidoreductase activity, acting on paired donors, with incorporation or reduction of molecular oxygen"/>
    <property type="evidence" value="ECO:0007669"/>
    <property type="project" value="InterPro"/>
</dbReference>
<dbReference type="CDD" id="cd20628">
    <property type="entry name" value="CYP4"/>
    <property type="match status" value="1"/>
</dbReference>
<dbReference type="Gene3D" id="1.10.630.10">
    <property type="entry name" value="Cytochrome P450"/>
    <property type="match status" value="1"/>
</dbReference>
<dbReference type="InterPro" id="IPR001128">
    <property type="entry name" value="Cyt_P450"/>
</dbReference>
<dbReference type="InterPro" id="IPR017972">
    <property type="entry name" value="Cyt_P450_CS"/>
</dbReference>
<dbReference type="InterPro" id="IPR002403">
    <property type="entry name" value="Cyt_P450_E_grp-IV"/>
</dbReference>
<dbReference type="InterPro" id="IPR036396">
    <property type="entry name" value="Cyt_P450_sf"/>
</dbReference>
<dbReference type="InterPro" id="IPR050196">
    <property type="entry name" value="Cytochrome_P450_Monoox"/>
</dbReference>
<dbReference type="PANTHER" id="PTHR24291:SF177">
    <property type="entry name" value="CYTOCHROME P450 4AA1-RELATED"/>
    <property type="match status" value="1"/>
</dbReference>
<dbReference type="PANTHER" id="PTHR24291">
    <property type="entry name" value="CYTOCHROME P450 FAMILY 4"/>
    <property type="match status" value="1"/>
</dbReference>
<dbReference type="Pfam" id="PF00067">
    <property type="entry name" value="p450"/>
    <property type="match status" value="1"/>
</dbReference>
<dbReference type="PRINTS" id="PR00465">
    <property type="entry name" value="EP450IV"/>
</dbReference>
<dbReference type="PRINTS" id="PR00385">
    <property type="entry name" value="P450"/>
</dbReference>
<dbReference type="SUPFAM" id="SSF48264">
    <property type="entry name" value="Cytochrome P450"/>
    <property type="match status" value="1"/>
</dbReference>
<dbReference type="PROSITE" id="PS00086">
    <property type="entry name" value="CYTOCHROME_P450"/>
    <property type="match status" value="1"/>
</dbReference>